<gene>
    <name evidence="1" type="primary">rpmB</name>
    <name evidence="1" type="synonym">rpl28</name>
    <name type="ordered locus">Pro_0933</name>
</gene>
<keyword id="KW-1185">Reference proteome</keyword>
<keyword id="KW-0687">Ribonucleoprotein</keyword>
<keyword id="KW-0689">Ribosomal protein</keyword>
<comment type="similarity">
    <text evidence="1">Belongs to the bacterial ribosomal protein bL28 family.</text>
</comment>
<comment type="sequence caution" evidence="2">
    <conflict type="erroneous initiation">
        <sequence resource="EMBL-CDS" id="AAP99977"/>
    </conflict>
</comment>
<organism>
    <name type="scientific">Prochlorococcus marinus (strain SARG / CCMP1375 / SS120)</name>
    <dbReference type="NCBI Taxonomy" id="167539"/>
    <lineage>
        <taxon>Bacteria</taxon>
        <taxon>Bacillati</taxon>
        <taxon>Cyanobacteriota</taxon>
        <taxon>Cyanophyceae</taxon>
        <taxon>Synechococcales</taxon>
        <taxon>Prochlorococcaceae</taxon>
        <taxon>Prochlorococcus</taxon>
    </lineage>
</organism>
<accession>Q7VC09</accession>
<sequence length="78" mass="8981">MSRVCELSGTRANNGMAVSHSHIRTKKLQQANLQKRRLWWEEGKKWLNIRVSTSTLKTIQKKGLDSYAKSQGIDLKKL</sequence>
<protein>
    <recommendedName>
        <fullName evidence="1">Large ribosomal subunit protein bL28</fullName>
    </recommendedName>
    <alternativeName>
        <fullName evidence="2">50S ribosomal protein L28</fullName>
    </alternativeName>
</protein>
<name>RL28_PROMA</name>
<reference key="1">
    <citation type="journal article" date="2003" name="Proc. Natl. Acad. Sci. U.S.A.">
        <title>Genome sequence of the cyanobacterium Prochlorococcus marinus SS120, a nearly minimal oxyphototrophic genome.</title>
        <authorList>
            <person name="Dufresne A."/>
            <person name="Salanoubat M."/>
            <person name="Partensky F."/>
            <person name="Artiguenave F."/>
            <person name="Axmann I.M."/>
            <person name="Barbe V."/>
            <person name="Duprat S."/>
            <person name="Galperin M.Y."/>
            <person name="Koonin E.V."/>
            <person name="Le Gall F."/>
            <person name="Makarova K.S."/>
            <person name="Ostrowski M."/>
            <person name="Oztas S."/>
            <person name="Robert C."/>
            <person name="Rogozin I.B."/>
            <person name="Scanlan D.J."/>
            <person name="Tandeau de Marsac N."/>
            <person name="Weissenbach J."/>
            <person name="Wincker P."/>
            <person name="Wolf Y.I."/>
            <person name="Hess W.R."/>
        </authorList>
    </citation>
    <scope>NUCLEOTIDE SEQUENCE [LARGE SCALE GENOMIC DNA]</scope>
    <source>
        <strain>SARG / CCMP1375 / SS120</strain>
    </source>
</reference>
<proteinExistence type="inferred from homology"/>
<evidence type="ECO:0000255" key="1">
    <source>
        <dbReference type="HAMAP-Rule" id="MF_00373"/>
    </source>
</evidence>
<evidence type="ECO:0000305" key="2"/>
<dbReference type="EMBL" id="AE017126">
    <property type="protein sequence ID" value="AAP99977.1"/>
    <property type="status" value="ALT_INIT"/>
    <property type="molecule type" value="Genomic_DNA"/>
</dbReference>
<dbReference type="RefSeq" id="NP_875325.3">
    <property type="nucleotide sequence ID" value="NC_005042.1"/>
</dbReference>
<dbReference type="RefSeq" id="WP_011125085.1">
    <property type="nucleotide sequence ID" value="NC_005042.1"/>
</dbReference>
<dbReference type="SMR" id="Q7VC09"/>
<dbReference type="STRING" id="167539.Pro_0933"/>
<dbReference type="EnsemblBacteria" id="AAP99977">
    <property type="protein sequence ID" value="AAP99977"/>
    <property type="gene ID" value="Pro_0933"/>
</dbReference>
<dbReference type="KEGG" id="pma:Pro_0933"/>
<dbReference type="PATRIC" id="fig|167539.5.peg.982"/>
<dbReference type="eggNOG" id="COG0227">
    <property type="taxonomic scope" value="Bacteria"/>
</dbReference>
<dbReference type="HOGENOM" id="CLU_064548_3_0_3"/>
<dbReference type="OrthoDB" id="9805609at2"/>
<dbReference type="Proteomes" id="UP000001420">
    <property type="component" value="Chromosome"/>
</dbReference>
<dbReference type="GO" id="GO:1990904">
    <property type="term" value="C:ribonucleoprotein complex"/>
    <property type="evidence" value="ECO:0007669"/>
    <property type="project" value="UniProtKB-KW"/>
</dbReference>
<dbReference type="GO" id="GO:0005840">
    <property type="term" value="C:ribosome"/>
    <property type="evidence" value="ECO:0007669"/>
    <property type="project" value="UniProtKB-KW"/>
</dbReference>
<dbReference type="GO" id="GO:0003735">
    <property type="term" value="F:structural constituent of ribosome"/>
    <property type="evidence" value="ECO:0007669"/>
    <property type="project" value="InterPro"/>
</dbReference>
<dbReference type="GO" id="GO:0006412">
    <property type="term" value="P:translation"/>
    <property type="evidence" value="ECO:0007669"/>
    <property type="project" value="UniProtKB-UniRule"/>
</dbReference>
<dbReference type="Gene3D" id="2.30.170.40">
    <property type="entry name" value="Ribosomal protein L28/L24"/>
    <property type="match status" value="1"/>
</dbReference>
<dbReference type="HAMAP" id="MF_00373">
    <property type="entry name" value="Ribosomal_bL28"/>
    <property type="match status" value="1"/>
</dbReference>
<dbReference type="InterPro" id="IPR026569">
    <property type="entry name" value="Ribosomal_bL28"/>
</dbReference>
<dbReference type="InterPro" id="IPR034704">
    <property type="entry name" value="Ribosomal_bL28/bL31-like_sf"/>
</dbReference>
<dbReference type="InterPro" id="IPR001383">
    <property type="entry name" value="Ribosomal_bL28_bact-type"/>
</dbReference>
<dbReference type="InterPro" id="IPR037147">
    <property type="entry name" value="Ribosomal_bL28_sf"/>
</dbReference>
<dbReference type="NCBIfam" id="TIGR00009">
    <property type="entry name" value="L28"/>
    <property type="match status" value="1"/>
</dbReference>
<dbReference type="PANTHER" id="PTHR13528">
    <property type="entry name" value="39S RIBOSOMAL PROTEIN L28, MITOCHONDRIAL"/>
    <property type="match status" value="1"/>
</dbReference>
<dbReference type="PANTHER" id="PTHR13528:SF2">
    <property type="entry name" value="LARGE RIBOSOMAL SUBUNIT PROTEIN BL28M"/>
    <property type="match status" value="1"/>
</dbReference>
<dbReference type="Pfam" id="PF00830">
    <property type="entry name" value="Ribosomal_L28"/>
    <property type="match status" value="1"/>
</dbReference>
<dbReference type="SUPFAM" id="SSF143800">
    <property type="entry name" value="L28p-like"/>
    <property type="match status" value="1"/>
</dbReference>
<feature type="chain" id="PRO_0000178528" description="Large ribosomal subunit protein bL28">
    <location>
        <begin position="1"/>
        <end position="78"/>
    </location>
</feature>